<accession>Q7MYX4</accession>
<organism>
    <name type="scientific">Photorhabdus laumondii subsp. laumondii (strain DSM 15139 / CIP 105565 / TT01)</name>
    <name type="common">Photorhabdus luminescens subsp. laumondii</name>
    <dbReference type="NCBI Taxonomy" id="243265"/>
    <lineage>
        <taxon>Bacteria</taxon>
        <taxon>Pseudomonadati</taxon>
        <taxon>Pseudomonadota</taxon>
        <taxon>Gammaproteobacteria</taxon>
        <taxon>Enterobacterales</taxon>
        <taxon>Morganellaceae</taxon>
        <taxon>Photorhabdus</taxon>
    </lineage>
</organism>
<protein>
    <recommendedName>
        <fullName evidence="1">Large ribosomal subunit protein bL21</fullName>
    </recommendedName>
    <alternativeName>
        <fullName evidence="2">50S ribosomal protein L21</fullName>
    </alternativeName>
</protein>
<proteinExistence type="inferred from homology"/>
<dbReference type="EMBL" id="BX571874">
    <property type="protein sequence ID" value="CAE16914.1"/>
    <property type="molecule type" value="Genomic_DNA"/>
</dbReference>
<dbReference type="RefSeq" id="WP_011148618.1">
    <property type="nucleotide sequence ID" value="NC_005126.1"/>
</dbReference>
<dbReference type="SMR" id="Q7MYX4"/>
<dbReference type="STRING" id="243265.plu4542"/>
<dbReference type="GeneID" id="88805004"/>
<dbReference type="KEGG" id="plu:plu4542"/>
<dbReference type="eggNOG" id="COG0261">
    <property type="taxonomic scope" value="Bacteria"/>
</dbReference>
<dbReference type="HOGENOM" id="CLU_061463_3_3_6"/>
<dbReference type="OrthoDB" id="9813334at2"/>
<dbReference type="Proteomes" id="UP000002514">
    <property type="component" value="Chromosome"/>
</dbReference>
<dbReference type="GO" id="GO:0005737">
    <property type="term" value="C:cytoplasm"/>
    <property type="evidence" value="ECO:0007669"/>
    <property type="project" value="UniProtKB-ARBA"/>
</dbReference>
<dbReference type="GO" id="GO:1990904">
    <property type="term" value="C:ribonucleoprotein complex"/>
    <property type="evidence" value="ECO:0007669"/>
    <property type="project" value="UniProtKB-KW"/>
</dbReference>
<dbReference type="GO" id="GO:0005840">
    <property type="term" value="C:ribosome"/>
    <property type="evidence" value="ECO:0007669"/>
    <property type="project" value="UniProtKB-KW"/>
</dbReference>
<dbReference type="GO" id="GO:0019843">
    <property type="term" value="F:rRNA binding"/>
    <property type="evidence" value="ECO:0007669"/>
    <property type="project" value="UniProtKB-UniRule"/>
</dbReference>
<dbReference type="GO" id="GO:0003735">
    <property type="term" value="F:structural constituent of ribosome"/>
    <property type="evidence" value="ECO:0007669"/>
    <property type="project" value="InterPro"/>
</dbReference>
<dbReference type="GO" id="GO:0006412">
    <property type="term" value="P:translation"/>
    <property type="evidence" value="ECO:0007669"/>
    <property type="project" value="UniProtKB-UniRule"/>
</dbReference>
<dbReference type="HAMAP" id="MF_01363">
    <property type="entry name" value="Ribosomal_bL21"/>
    <property type="match status" value="1"/>
</dbReference>
<dbReference type="InterPro" id="IPR028909">
    <property type="entry name" value="bL21-like"/>
</dbReference>
<dbReference type="InterPro" id="IPR036164">
    <property type="entry name" value="bL21-like_sf"/>
</dbReference>
<dbReference type="InterPro" id="IPR001787">
    <property type="entry name" value="Ribosomal_bL21"/>
</dbReference>
<dbReference type="InterPro" id="IPR018258">
    <property type="entry name" value="Ribosomal_bL21_CS"/>
</dbReference>
<dbReference type="NCBIfam" id="TIGR00061">
    <property type="entry name" value="L21"/>
    <property type="match status" value="1"/>
</dbReference>
<dbReference type="PANTHER" id="PTHR21349">
    <property type="entry name" value="50S RIBOSOMAL PROTEIN L21"/>
    <property type="match status" value="1"/>
</dbReference>
<dbReference type="PANTHER" id="PTHR21349:SF0">
    <property type="entry name" value="LARGE RIBOSOMAL SUBUNIT PROTEIN BL21M"/>
    <property type="match status" value="1"/>
</dbReference>
<dbReference type="Pfam" id="PF00829">
    <property type="entry name" value="Ribosomal_L21p"/>
    <property type="match status" value="1"/>
</dbReference>
<dbReference type="SUPFAM" id="SSF141091">
    <property type="entry name" value="L21p-like"/>
    <property type="match status" value="1"/>
</dbReference>
<dbReference type="PROSITE" id="PS01169">
    <property type="entry name" value="RIBOSOMAL_L21"/>
    <property type="match status" value="1"/>
</dbReference>
<evidence type="ECO:0000255" key="1">
    <source>
        <dbReference type="HAMAP-Rule" id="MF_01363"/>
    </source>
</evidence>
<evidence type="ECO:0000305" key="2"/>
<feature type="chain" id="PRO_0000269357" description="Large ribosomal subunit protein bL21">
    <location>
        <begin position="1"/>
        <end position="102"/>
    </location>
</feature>
<gene>
    <name evidence="1" type="primary">rplU</name>
    <name type="ordered locus">plu4542</name>
</gene>
<sequence length="102" mass="11453">MYAVFQSGGKQHRVSEGQTIRLEKLDIATGETVEFDQVLMVANGDDIKIGAPVVEGVKIKAEVVAHGRGEKIKIVKFRRRKHSRKQQGHRQWFTDVKITGIA</sequence>
<reference key="1">
    <citation type="journal article" date="2003" name="Nat. Biotechnol.">
        <title>The genome sequence of the entomopathogenic bacterium Photorhabdus luminescens.</title>
        <authorList>
            <person name="Duchaud E."/>
            <person name="Rusniok C."/>
            <person name="Frangeul L."/>
            <person name="Buchrieser C."/>
            <person name="Givaudan A."/>
            <person name="Taourit S."/>
            <person name="Bocs S."/>
            <person name="Boursaux-Eude C."/>
            <person name="Chandler M."/>
            <person name="Charles J.-F."/>
            <person name="Dassa E."/>
            <person name="Derose R."/>
            <person name="Derzelle S."/>
            <person name="Freyssinet G."/>
            <person name="Gaudriault S."/>
            <person name="Medigue C."/>
            <person name="Lanois A."/>
            <person name="Powell K."/>
            <person name="Siguier P."/>
            <person name="Vincent R."/>
            <person name="Wingate V."/>
            <person name="Zouine M."/>
            <person name="Glaser P."/>
            <person name="Boemare N."/>
            <person name="Danchin A."/>
            <person name="Kunst F."/>
        </authorList>
    </citation>
    <scope>NUCLEOTIDE SEQUENCE [LARGE SCALE GENOMIC DNA]</scope>
    <source>
        <strain>DSM 15139 / CIP 105565 / TT01</strain>
    </source>
</reference>
<name>RL21_PHOLL</name>
<comment type="function">
    <text evidence="1">This protein binds to 23S rRNA in the presence of protein L20.</text>
</comment>
<comment type="subunit">
    <text evidence="1">Part of the 50S ribosomal subunit. Contacts protein L20.</text>
</comment>
<comment type="similarity">
    <text evidence="1">Belongs to the bacterial ribosomal protein bL21 family.</text>
</comment>
<keyword id="KW-1185">Reference proteome</keyword>
<keyword id="KW-0687">Ribonucleoprotein</keyword>
<keyword id="KW-0689">Ribosomal protein</keyword>
<keyword id="KW-0694">RNA-binding</keyword>
<keyword id="KW-0699">rRNA-binding</keyword>